<evidence type="ECO:0000255" key="1">
    <source>
        <dbReference type="HAMAP-Rule" id="MF_01220"/>
    </source>
</evidence>
<accession>Q9RU81</accession>
<comment type="function">
    <text evidence="1">Catalyzes the reversible phosphorylation of UMP to UDP.</text>
</comment>
<comment type="catalytic activity">
    <reaction evidence="1">
        <text>UMP + ATP = UDP + ADP</text>
        <dbReference type="Rhea" id="RHEA:24400"/>
        <dbReference type="ChEBI" id="CHEBI:30616"/>
        <dbReference type="ChEBI" id="CHEBI:57865"/>
        <dbReference type="ChEBI" id="CHEBI:58223"/>
        <dbReference type="ChEBI" id="CHEBI:456216"/>
        <dbReference type="EC" id="2.7.4.22"/>
    </reaction>
</comment>
<comment type="activity regulation">
    <text evidence="1">Allosterically activated by GTP. Inhibited by UTP.</text>
</comment>
<comment type="pathway">
    <text evidence="1">Pyrimidine metabolism; CTP biosynthesis via de novo pathway; UDP from UMP (UMPK route): step 1/1.</text>
</comment>
<comment type="subunit">
    <text evidence="1">Homohexamer.</text>
</comment>
<comment type="subcellular location">
    <subcellularLocation>
        <location evidence="1">Cytoplasm</location>
    </subcellularLocation>
</comment>
<comment type="similarity">
    <text evidence="1">Belongs to the UMP kinase family.</text>
</comment>
<organism>
    <name type="scientific">Deinococcus radiodurans (strain ATCC 13939 / DSM 20539 / JCM 16871 / CCUG 27074 / LMG 4051 / NBRC 15346 / NCIMB 9279 / VKM B-1422 / R1)</name>
    <dbReference type="NCBI Taxonomy" id="243230"/>
    <lineage>
        <taxon>Bacteria</taxon>
        <taxon>Thermotogati</taxon>
        <taxon>Deinococcota</taxon>
        <taxon>Deinococci</taxon>
        <taxon>Deinococcales</taxon>
        <taxon>Deinococcaceae</taxon>
        <taxon>Deinococcus</taxon>
    </lineage>
</organism>
<sequence>MLKRREPDMFKRVLLKLSGEFLAGDNGFGISPETTAELARRIIGALDGTEVELAVVIGGGNLWRGARNGQGMDPATADYIGMLGTVMNAMALQDAMEAAGKPTRIMSAIHMQQVAEPYIRRRAMRHLEKGRVVIFGGGNGAPFFTTDTTSTLRALEIGADVVLMAKNAVDGVYDSDPRKNPDAKRYEQLTHMDVVEQRLEVMDATALTLCMDKGLPIVVFDIFEEGNLARLLRGERVGTLIQSRG</sequence>
<keyword id="KW-0021">Allosteric enzyme</keyword>
<keyword id="KW-0067">ATP-binding</keyword>
<keyword id="KW-0963">Cytoplasm</keyword>
<keyword id="KW-0418">Kinase</keyword>
<keyword id="KW-0547">Nucleotide-binding</keyword>
<keyword id="KW-0665">Pyrimidine biosynthesis</keyword>
<keyword id="KW-1185">Reference proteome</keyword>
<keyword id="KW-0808">Transferase</keyword>
<feature type="chain" id="PRO_0000143841" description="Uridylate kinase">
    <location>
        <begin position="1"/>
        <end position="245"/>
    </location>
</feature>
<feature type="region of interest" description="Involved in allosteric activation by GTP" evidence="1">
    <location>
        <begin position="24"/>
        <end position="29"/>
    </location>
</feature>
<feature type="binding site" evidence="1">
    <location>
        <begin position="16"/>
        <end position="19"/>
    </location>
    <ligand>
        <name>ATP</name>
        <dbReference type="ChEBI" id="CHEBI:30616"/>
    </ligand>
</feature>
<feature type="binding site" evidence="1">
    <location>
        <position position="59"/>
    </location>
    <ligand>
        <name>UMP</name>
        <dbReference type="ChEBI" id="CHEBI:57865"/>
    </ligand>
</feature>
<feature type="binding site" evidence="1">
    <location>
        <position position="60"/>
    </location>
    <ligand>
        <name>ATP</name>
        <dbReference type="ChEBI" id="CHEBI:30616"/>
    </ligand>
</feature>
<feature type="binding site" evidence="1">
    <location>
        <position position="64"/>
    </location>
    <ligand>
        <name>ATP</name>
        <dbReference type="ChEBI" id="CHEBI:30616"/>
    </ligand>
</feature>
<feature type="binding site" evidence="1">
    <location>
        <position position="78"/>
    </location>
    <ligand>
        <name>UMP</name>
        <dbReference type="ChEBI" id="CHEBI:57865"/>
    </ligand>
</feature>
<feature type="binding site" evidence="1">
    <location>
        <begin position="139"/>
        <end position="146"/>
    </location>
    <ligand>
        <name>UMP</name>
        <dbReference type="ChEBI" id="CHEBI:57865"/>
    </ligand>
</feature>
<feature type="binding site" evidence="1">
    <location>
        <position position="167"/>
    </location>
    <ligand>
        <name>ATP</name>
        <dbReference type="ChEBI" id="CHEBI:30616"/>
    </ligand>
</feature>
<feature type="binding site" evidence="1">
    <location>
        <position position="173"/>
    </location>
    <ligand>
        <name>ATP</name>
        <dbReference type="ChEBI" id="CHEBI:30616"/>
    </ligand>
</feature>
<feature type="binding site" evidence="1">
    <location>
        <position position="176"/>
    </location>
    <ligand>
        <name>ATP</name>
        <dbReference type="ChEBI" id="CHEBI:30616"/>
    </ligand>
</feature>
<protein>
    <recommendedName>
        <fullName evidence="1">Uridylate kinase</fullName>
        <shortName evidence="1">UK</shortName>
        <ecNumber evidence="1">2.7.4.22</ecNumber>
    </recommendedName>
    <alternativeName>
        <fullName evidence="1">Uridine monophosphate kinase</fullName>
        <shortName evidence="1">UMP kinase</shortName>
        <shortName evidence="1">UMPK</shortName>
    </alternativeName>
</protein>
<name>PYRH_DEIRA</name>
<proteinExistence type="inferred from homology"/>
<gene>
    <name evidence="1" type="primary">pyrH</name>
    <name type="ordered locus">DR_1511</name>
</gene>
<dbReference type="EC" id="2.7.4.22" evidence="1"/>
<dbReference type="EMBL" id="AE000513">
    <property type="protein sequence ID" value="AAF11078.1"/>
    <property type="molecule type" value="Genomic_DNA"/>
</dbReference>
<dbReference type="PIR" id="D75386">
    <property type="entry name" value="D75386"/>
</dbReference>
<dbReference type="RefSeq" id="NP_295234.1">
    <property type="nucleotide sequence ID" value="NC_001263.1"/>
</dbReference>
<dbReference type="SMR" id="Q9RU81"/>
<dbReference type="FunCoup" id="Q9RU81">
    <property type="interactions" value="529"/>
</dbReference>
<dbReference type="STRING" id="243230.DR_1511"/>
<dbReference type="PaxDb" id="243230-DR_1511"/>
<dbReference type="EnsemblBacteria" id="AAF11078">
    <property type="protein sequence ID" value="AAF11078"/>
    <property type="gene ID" value="DR_1511"/>
</dbReference>
<dbReference type="KEGG" id="dra:DR_1511"/>
<dbReference type="PATRIC" id="fig|243230.17.peg.1714"/>
<dbReference type="eggNOG" id="COG0528">
    <property type="taxonomic scope" value="Bacteria"/>
</dbReference>
<dbReference type="HOGENOM" id="CLU_033861_0_0_0"/>
<dbReference type="InParanoid" id="Q9RU81"/>
<dbReference type="OrthoDB" id="9807458at2"/>
<dbReference type="UniPathway" id="UPA00159">
    <property type="reaction ID" value="UER00275"/>
</dbReference>
<dbReference type="Proteomes" id="UP000002524">
    <property type="component" value="Chromosome 1"/>
</dbReference>
<dbReference type="GO" id="GO:0005737">
    <property type="term" value="C:cytoplasm"/>
    <property type="evidence" value="ECO:0007669"/>
    <property type="project" value="UniProtKB-SubCell"/>
</dbReference>
<dbReference type="GO" id="GO:0005524">
    <property type="term" value="F:ATP binding"/>
    <property type="evidence" value="ECO:0007669"/>
    <property type="project" value="UniProtKB-KW"/>
</dbReference>
<dbReference type="GO" id="GO:0033862">
    <property type="term" value="F:UMP kinase activity"/>
    <property type="evidence" value="ECO:0000318"/>
    <property type="project" value="GO_Central"/>
</dbReference>
<dbReference type="GO" id="GO:0044210">
    <property type="term" value="P:'de novo' CTP biosynthetic process"/>
    <property type="evidence" value="ECO:0007669"/>
    <property type="project" value="UniProtKB-UniRule"/>
</dbReference>
<dbReference type="GO" id="GO:0006225">
    <property type="term" value="P:UDP biosynthetic process"/>
    <property type="evidence" value="ECO:0000318"/>
    <property type="project" value="GO_Central"/>
</dbReference>
<dbReference type="CDD" id="cd04254">
    <property type="entry name" value="AAK_UMPK-PyrH-Ec"/>
    <property type="match status" value="1"/>
</dbReference>
<dbReference type="FunFam" id="3.40.1160.10:FF:000001">
    <property type="entry name" value="Uridylate kinase"/>
    <property type="match status" value="1"/>
</dbReference>
<dbReference type="Gene3D" id="3.40.1160.10">
    <property type="entry name" value="Acetylglutamate kinase-like"/>
    <property type="match status" value="1"/>
</dbReference>
<dbReference type="HAMAP" id="MF_01220_B">
    <property type="entry name" value="PyrH_B"/>
    <property type="match status" value="1"/>
</dbReference>
<dbReference type="InterPro" id="IPR036393">
    <property type="entry name" value="AceGlu_kinase-like_sf"/>
</dbReference>
<dbReference type="InterPro" id="IPR001048">
    <property type="entry name" value="Asp/Glu/Uridylate_kinase"/>
</dbReference>
<dbReference type="InterPro" id="IPR011817">
    <property type="entry name" value="Uridylate_kinase"/>
</dbReference>
<dbReference type="InterPro" id="IPR015963">
    <property type="entry name" value="Uridylate_kinase_bac"/>
</dbReference>
<dbReference type="NCBIfam" id="TIGR02075">
    <property type="entry name" value="pyrH_bact"/>
    <property type="match status" value="1"/>
</dbReference>
<dbReference type="PANTHER" id="PTHR42833">
    <property type="entry name" value="URIDYLATE KINASE"/>
    <property type="match status" value="1"/>
</dbReference>
<dbReference type="PANTHER" id="PTHR42833:SF4">
    <property type="entry name" value="URIDYLATE KINASE PUMPKIN, CHLOROPLASTIC"/>
    <property type="match status" value="1"/>
</dbReference>
<dbReference type="Pfam" id="PF00696">
    <property type="entry name" value="AA_kinase"/>
    <property type="match status" value="1"/>
</dbReference>
<dbReference type="PIRSF" id="PIRSF005650">
    <property type="entry name" value="Uridylate_kin"/>
    <property type="match status" value="1"/>
</dbReference>
<dbReference type="SUPFAM" id="SSF53633">
    <property type="entry name" value="Carbamate kinase-like"/>
    <property type="match status" value="1"/>
</dbReference>
<reference key="1">
    <citation type="journal article" date="1999" name="Science">
        <title>Genome sequence of the radioresistant bacterium Deinococcus radiodurans R1.</title>
        <authorList>
            <person name="White O."/>
            <person name="Eisen J.A."/>
            <person name="Heidelberg J.F."/>
            <person name="Hickey E.K."/>
            <person name="Peterson J.D."/>
            <person name="Dodson R.J."/>
            <person name="Haft D.H."/>
            <person name="Gwinn M.L."/>
            <person name="Nelson W.C."/>
            <person name="Richardson D.L."/>
            <person name="Moffat K.S."/>
            <person name="Qin H."/>
            <person name="Jiang L."/>
            <person name="Pamphile W."/>
            <person name="Crosby M."/>
            <person name="Shen M."/>
            <person name="Vamathevan J.J."/>
            <person name="Lam P."/>
            <person name="McDonald L.A."/>
            <person name="Utterback T.R."/>
            <person name="Zalewski C."/>
            <person name="Makarova K.S."/>
            <person name="Aravind L."/>
            <person name="Daly M.J."/>
            <person name="Minton K.W."/>
            <person name="Fleischmann R.D."/>
            <person name="Ketchum K.A."/>
            <person name="Nelson K.E."/>
            <person name="Salzberg S.L."/>
            <person name="Smith H.O."/>
            <person name="Venter J.C."/>
            <person name="Fraser C.M."/>
        </authorList>
    </citation>
    <scope>NUCLEOTIDE SEQUENCE [LARGE SCALE GENOMIC DNA]</scope>
    <source>
        <strain>ATCC 13939 / DSM 20539 / JCM 16871 / CCUG 27074 / LMG 4051 / NBRC 15346 / NCIMB 9279 / VKM B-1422 / R1</strain>
    </source>
</reference>